<proteinExistence type="inferred from homology"/>
<reference key="1">
    <citation type="submission" date="2009-01" db="EMBL/GenBank/DDBJ databases">
        <title>Complete sequence of Diaphorobacter sp. TPSY.</title>
        <authorList>
            <consortium name="US DOE Joint Genome Institute"/>
            <person name="Lucas S."/>
            <person name="Copeland A."/>
            <person name="Lapidus A."/>
            <person name="Glavina del Rio T."/>
            <person name="Tice H."/>
            <person name="Bruce D."/>
            <person name="Goodwin L."/>
            <person name="Pitluck S."/>
            <person name="Chertkov O."/>
            <person name="Brettin T."/>
            <person name="Detter J.C."/>
            <person name="Han C."/>
            <person name="Larimer F."/>
            <person name="Land M."/>
            <person name="Hauser L."/>
            <person name="Kyrpides N."/>
            <person name="Mikhailova N."/>
            <person name="Coates J.D."/>
        </authorList>
    </citation>
    <scope>NUCLEOTIDE SEQUENCE [LARGE SCALE GENOMIC DNA]</scope>
    <source>
        <strain>TPSY</strain>
    </source>
</reference>
<comment type="function">
    <text evidence="1">Catalyzes the phosphorolysis of diverse nucleosides, yielding D-ribose 1-phosphate and the respective free bases. Can use uridine, adenosine, guanosine, cytidine, thymidine, inosine and xanthosine as substrates. Also catalyzes the reverse reactions.</text>
</comment>
<comment type="catalytic activity">
    <reaction evidence="1">
        <text>a purine D-ribonucleoside + phosphate = a purine nucleobase + alpha-D-ribose 1-phosphate</text>
        <dbReference type="Rhea" id="RHEA:19805"/>
        <dbReference type="ChEBI" id="CHEBI:26386"/>
        <dbReference type="ChEBI" id="CHEBI:43474"/>
        <dbReference type="ChEBI" id="CHEBI:57720"/>
        <dbReference type="ChEBI" id="CHEBI:142355"/>
        <dbReference type="EC" id="2.4.2.1"/>
    </reaction>
</comment>
<comment type="catalytic activity">
    <reaction evidence="1">
        <text>adenosine + phosphate = alpha-D-ribose 1-phosphate + adenine</text>
        <dbReference type="Rhea" id="RHEA:27642"/>
        <dbReference type="ChEBI" id="CHEBI:16335"/>
        <dbReference type="ChEBI" id="CHEBI:16708"/>
        <dbReference type="ChEBI" id="CHEBI:43474"/>
        <dbReference type="ChEBI" id="CHEBI:57720"/>
        <dbReference type="EC" id="2.4.2.1"/>
    </reaction>
</comment>
<comment type="catalytic activity">
    <reaction evidence="1">
        <text>cytidine + phosphate = cytosine + alpha-D-ribose 1-phosphate</text>
        <dbReference type="Rhea" id="RHEA:52540"/>
        <dbReference type="ChEBI" id="CHEBI:16040"/>
        <dbReference type="ChEBI" id="CHEBI:17562"/>
        <dbReference type="ChEBI" id="CHEBI:43474"/>
        <dbReference type="ChEBI" id="CHEBI:57720"/>
        <dbReference type="EC" id="2.4.2.2"/>
    </reaction>
</comment>
<comment type="catalytic activity">
    <reaction evidence="1">
        <text>guanosine + phosphate = alpha-D-ribose 1-phosphate + guanine</text>
        <dbReference type="Rhea" id="RHEA:13233"/>
        <dbReference type="ChEBI" id="CHEBI:16235"/>
        <dbReference type="ChEBI" id="CHEBI:16750"/>
        <dbReference type="ChEBI" id="CHEBI:43474"/>
        <dbReference type="ChEBI" id="CHEBI:57720"/>
        <dbReference type="EC" id="2.4.2.1"/>
    </reaction>
</comment>
<comment type="catalytic activity">
    <reaction evidence="1">
        <text>inosine + phosphate = alpha-D-ribose 1-phosphate + hypoxanthine</text>
        <dbReference type="Rhea" id="RHEA:27646"/>
        <dbReference type="ChEBI" id="CHEBI:17368"/>
        <dbReference type="ChEBI" id="CHEBI:17596"/>
        <dbReference type="ChEBI" id="CHEBI:43474"/>
        <dbReference type="ChEBI" id="CHEBI:57720"/>
        <dbReference type="EC" id="2.4.2.1"/>
    </reaction>
</comment>
<comment type="catalytic activity">
    <reaction evidence="1">
        <text>thymidine + phosphate = 2-deoxy-alpha-D-ribose 1-phosphate + thymine</text>
        <dbReference type="Rhea" id="RHEA:16037"/>
        <dbReference type="ChEBI" id="CHEBI:17748"/>
        <dbReference type="ChEBI" id="CHEBI:17821"/>
        <dbReference type="ChEBI" id="CHEBI:43474"/>
        <dbReference type="ChEBI" id="CHEBI:57259"/>
        <dbReference type="EC" id="2.4.2.2"/>
    </reaction>
</comment>
<comment type="catalytic activity">
    <reaction evidence="1">
        <text>uridine + phosphate = alpha-D-ribose 1-phosphate + uracil</text>
        <dbReference type="Rhea" id="RHEA:24388"/>
        <dbReference type="ChEBI" id="CHEBI:16704"/>
        <dbReference type="ChEBI" id="CHEBI:17568"/>
        <dbReference type="ChEBI" id="CHEBI:43474"/>
        <dbReference type="ChEBI" id="CHEBI:57720"/>
        <dbReference type="EC" id="2.4.2.2"/>
    </reaction>
</comment>
<comment type="catalytic activity">
    <reaction evidence="1">
        <text>xanthosine + phosphate = alpha-D-ribose 1-phosphate + xanthine</text>
        <dbReference type="Rhea" id="RHEA:27638"/>
        <dbReference type="ChEBI" id="CHEBI:17712"/>
        <dbReference type="ChEBI" id="CHEBI:18107"/>
        <dbReference type="ChEBI" id="CHEBI:43474"/>
        <dbReference type="ChEBI" id="CHEBI:57720"/>
        <dbReference type="EC" id="2.4.2.1"/>
    </reaction>
</comment>
<comment type="similarity">
    <text evidence="1">Belongs to the nucleoside phosphorylase PpnP family.</text>
</comment>
<organism>
    <name type="scientific">Acidovorax ebreus (strain TPSY)</name>
    <name type="common">Diaphorobacter sp. (strain TPSY)</name>
    <dbReference type="NCBI Taxonomy" id="535289"/>
    <lineage>
        <taxon>Bacteria</taxon>
        <taxon>Pseudomonadati</taxon>
        <taxon>Pseudomonadota</taxon>
        <taxon>Betaproteobacteria</taxon>
        <taxon>Burkholderiales</taxon>
        <taxon>Comamonadaceae</taxon>
        <taxon>Diaphorobacter</taxon>
    </lineage>
</organism>
<gene>
    <name evidence="1" type="primary">ppnP</name>
    <name type="ordered locus">Dtpsy_2232</name>
</gene>
<protein>
    <recommendedName>
        <fullName evidence="1">Pyrimidine/purine nucleoside phosphorylase</fullName>
        <ecNumber evidence="1">2.4.2.1</ecNumber>
        <ecNumber evidence="1">2.4.2.2</ecNumber>
    </recommendedName>
    <alternativeName>
        <fullName evidence="1">Adenosine phosphorylase</fullName>
    </alternativeName>
    <alternativeName>
        <fullName evidence="1">Cytidine phosphorylase</fullName>
    </alternativeName>
    <alternativeName>
        <fullName evidence="1">Guanosine phosphorylase</fullName>
    </alternativeName>
    <alternativeName>
        <fullName evidence="1">Inosine phosphorylase</fullName>
    </alternativeName>
    <alternativeName>
        <fullName evidence="1">Thymidine phosphorylase</fullName>
    </alternativeName>
    <alternativeName>
        <fullName evidence="1">Uridine phosphorylase</fullName>
    </alternativeName>
    <alternativeName>
        <fullName evidence="1">Xanthosine phosphorylase</fullName>
    </alternativeName>
</protein>
<name>PPNP_ACIET</name>
<keyword id="KW-0328">Glycosyltransferase</keyword>
<keyword id="KW-1185">Reference proteome</keyword>
<keyword id="KW-0808">Transferase</keyword>
<evidence type="ECO:0000255" key="1">
    <source>
        <dbReference type="HAMAP-Rule" id="MF_01537"/>
    </source>
</evidence>
<accession>B9MBJ1</accession>
<feature type="chain" id="PRO_1000185192" description="Pyrimidine/purine nucleoside phosphorylase">
    <location>
        <begin position="1"/>
        <end position="105"/>
    </location>
</feature>
<dbReference type="EC" id="2.4.2.1" evidence="1"/>
<dbReference type="EC" id="2.4.2.2" evidence="1"/>
<dbReference type="EMBL" id="CP001392">
    <property type="protein sequence ID" value="ACM33670.1"/>
    <property type="molecule type" value="Genomic_DNA"/>
</dbReference>
<dbReference type="RefSeq" id="WP_011805898.1">
    <property type="nucleotide sequence ID" value="NC_011992.1"/>
</dbReference>
<dbReference type="SMR" id="B9MBJ1"/>
<dbReference type="KEGG" id="dia:Dtpsy_2232"/>
<dbReference type="eggNOG" id="COG3123">
    <property type="taxonomic scope" value="Bacteria"/>
</dbReference>
<dbReference type="HOGENOM" id="CLU_157874_1_0_4"/>
<dbReference type="Proteomes" id="UP000000450">
    <property type="component" value="Chromosome"/>
</dbReference>
<dbReference type="GO" id="GO:0005829">
    <property type="term" value="C:cytosol"/>
    <property type="evidence" value="ECO:0007669"/>
    <property type="project" value="TreeGrafter"/>
</dbReference>
<dbReference type="GO" id="GO:0047975">
    <property type="term" value="F:guanosine phosphorylase activity"/>
    <property type="evidence" value="ECO:0007669"/>
    <property type="project" value="UniProtKB-EC"/>
</dbReference>
<dbReference type="GO" id="GO:0004731">
    <property type="term" value="F:purine-nucleoside phosphorylase activity"/>
    <property type="evidence" value="ECO:0007669"/>
    <property type="project" value="UniProtKB-UniRule"/>
</dbReference>
<dbReference type="GO" id="GO:0009032">
    <property type="term" value="F:thymidine phosphorylase activity"/>
    <property type="evidence" value="ECO:0007669"/>
    <property type="project" value="UniProtKB-EC"/>
</dbReference>
<dbReference type="GO" id="GO:0004850">
    <property type="term" value="F:uridine phosphorylase activity"/>
    <property type="evidence" value="ECO:0007669"/>
    <property type="project" value="UniProtKB-EC"/>
</dbReference>
<dbReference type="CDD" id="cd20296">
    <property type="entry name" value="cupin_PpnP-like"/>
    <property type="match status" value="1"/>
</dbReference>
<dbReference type="Gene3D" id="2.60.120.10">
    <property type="entry name" value="Jelly Rolls"/>
    <property type="match status" value="1"/>
</dbReference>
<dbReference type="HAMAP" id="MF_01537">
    <property type="entry name" value="Nucleos_phosphorylase_PpnP"/>
    <property type="match status" value="1"/>
</dbReference>
<dbReference type="InterPro" id="IPR009664">
    <property type="entry name" value="Ppnp"/>
</dbReference>
<dbReference type="InterPro" id="IPR014710">
    <property type="entry name" value="RmlC-like_jellyroll"/>
</dbReference>
<dbReference type="InterPro" id="IPR011051">
    <property type="entry name" value="RmlC_Cupin_sf"/>
</dbReference>
<dbReference type="PANTHER" id="PTHR36540">
    <property type="entry name" value="PYRIMIDINE/PURINE NUCLEOSIDE PHOSPHORYLASE"/>
    <property type="match status" value="1"/>
</dbReference>
<dbReference type="PANTHER" id="PTHR36540:SF1">
    <property type="entry name" value="PYRIMIDINE_PURINE NUCLEOSIDE PHOSPHORYLASE"/>
    <property type="match status" value="1"/>
</dbReference>
<dbReference type="Pfam" id="PF06865">
    <property type="entry name" value="Ppnp"/>
    <property type="match status" value="1"/>
</dbReference>
<dbReference type="SUPFAM" id="SSF51182">
    <property type="entry name" value="RmlC-like cupins"/>
    <property type="match status" value="1"/>
</dbReference>
<sequence length="105" mass="11245">MTTEKIDGVSVTTQANVYFDGKCVSHNLTYPDGTKKSVGVVLPATLTFGTGAPEIMECVGGSCEYQLDGTDAWVKVGAGEKFSVPGNSKFNIRVTEAFHYICHYG</sequence>